<accession>A4WDA7</accession>
<keyword id="KW-0067">ATP-binding</keyword>
<keyword id="KW-0143">Chaperone</keyword>
<keyword id="KW-0547">Nucleotide-binding</keyword>
<gene>
    <name evidence="1" type="primary">hscA</name>
    <name type="ordered locus">Ent638_3023</name>
</gene>
<dbReference type="EMBL" id="CP000653">
    <property type="protein sequence ID" value="ABP61687.1"/>
    <property type="molecule type" value="Genomic_DNA"/>
</dbReference>
<dbReference type="RefSeq" id="WP_015960019.1">
    <property type="nucleotide sequence ID" value="NC_009436.1"/>
</dbReference>
<dbReference type="SMR" id="A4WDA7"/>
<dbReference type="STRING" id="399742.Ent638_3023"/>
<dbReference type="KEGG" id="ent:Ent638_3023"/>
<dbReference type="eggNOG" id="COG0443">
    <property type="taxonomic scope" value="Bacteria"/>
</dbReference>
<dbReference type="HOGENOM" id="CLU_005965_3_0_6"/>
<dbReference type="OrthoDB" id="9766019at2"/>
<dbReference type="Proteomes" id="UP000000230">
    <property type="component" value="Chromosome"/>
</dbReference>
<dbReference type="GO" id="GO:0005524">
    <property type="term" value="F:ATP binding"/>
    <property type="evidence" value="ECO:0007669"/>
    <property type="project" value="UniProtKB-KW"/>
</dbReference>
<dbReference type="GO" id="GO:0016887">
    <property type="term" value="F:ATP hydrolysis activity"/>
    <property type="evidence" value="ECO:0007669"/>
    <property type="project" value="UniProtKB-UniRule"/>
</dbReference>
<dbReference type="GO" id="GO:0140662">
    <property type="term" value="F:ATP-dependent protein folding chaperone"/>
    <property type="evidence" value="ECO:0007669"/>
    <property type="project" value="InterPro"/>
</dbReference>
<dbReference type="GO" id="GO:0051082">
    <property type="term" value="F:unfolded protein binding"/>
    <property type="evidence" value="ECO:0007669"/>
    <property type="project" value="InterPro"/>
</dbReference>
<dbReference type="GO" id="GO:0016226">
    <property type="term" value="P:iron-sulfur cluster assembly"/>
    <property type="evidence" value="ECO:0007669"/>
    <property type="project" value="InterPro"/>
</dbReference>
<dbReference type="CDD" id="cd10236">
    <property type="entry name" value="ASKHA_NBD_HSP70_HscA"/>
    <property type="match status" value="1"/>
</dbReference>
<dbReference type="FunFam" id="1.20.1270.10:FF:000006">
    <property type="entry name" value="Chaperone protein HscA"/>
    <property type="match status" value="1"/>
</dbReference>
<dbReference type="FunFam" id="3.30.420.40:FF:000046">
    <property type="entry name" value="Chaperone protein HscA"/>
    <property type="match status" value="1"/>
</dbReference>
<dbReference type="FunFam" id="3.90.640.10:FF:000013">
    <property type="entry name" value="Chaperone protein HscA"/>
    <property type="match status" value="1"/>
</dbReference>
<dbReference type="FunFam" id="2.60.34.10:FF:000005">
    <property type="entry name" value="Chaperone protein HscA homolog"/>
    <property type="match status" value="1"/>
</dbReference>
<dbReference type="FunFam" id="3.30.420.40:FF:000020">
    <property type="entry name" value="Chaperone protein HscA homolog"/>
    <property type="match status" value="1"/>
</dbReference>
<dbReference type="Gene3D" id="1.20.1270.10">
    <property type="match status" value="1"/>
</dbReference>
<dbReference type="Gene3D" id="3.30.420.40">
    <property type="match status" value="2"/>
</dbReference>
<dbReference type="Gene3D" id="3.90.640.10">
    <property type="entry name" value="Actin, Chain A, domain 4"/>
    <property type="match status" value="1"/>
</dbReference>
<dbReference type="Gene3D" id="2.60.34.10">
    <property type="entry name" value="Substrate Binding Domain Of DNAk, Chain A, domain 1"/>
    <property type="match status" value="1"/>
</dbReference>
<dbReference type="HAMAP" id="MF_00679">
    <property type="entry name" value="HscA"/>
    <property type="match status" value="1"/>
</dbReference>
<dbReference type="InterPro" id="IPR043129">
    <property type="entry name" value="ATPase_NBD"/>
</dbReference>
<dbReference type="InterPro" id="IPR018181">
    <property type="entry name" value="Heat_shock_70_CS"/>
</dbReference>
<dbReference type="InterPro" id="IPR042039">
    <property type="entry name" value="HscA_NBD"/>
</dbReference>
<dbReference type="InterPro" id="IPR029048">
    <property type="entry name" value="HSP70_C_sf"/>
</dbReference>
<dbReference type="InterPro" id="IPR029047">
    <property type="entry name" value="HSP70_peptide-bd_sf"/>
</dbReference>
<dbReference type="InterPro" id="IPR013126">
    <property type="entry name" value="Hsp_70_fam"/>
</dbReference>
<dbReference type="InterPro" id="IPR010236">
    <property type="entry name" value="ISC_FeS_clus_asmbl_HscA"/>
</dbReference>
<dbReference type="NCBIfam" id="TIGR01991">
    <property type="entry name" value="HscA"/>
    <property type="match status" value="1"/>
</dbReference>
<dbReference type="NCBIfam" id="NF003520">
    <property type="entry name" value="PRK05183.1"/>
    <property type="match status" value="1"/>
</dbReference>
<dbReference type="PANTHER" id="PTHR19375">
    <property type="entry name" value="HEAT SHOCK PROTEIN 70KDA"/>
    <property type="match status" value="1"/>
</dbReference>
<dbReference type="Pfam" id="PF00012">
    <property type="entry name" value="HSP70"/>
    <property type="match status" value="1"/>
</dbReference>
<dbReference type="PRINTS" id="PR00301">
    <property type="entry name" value="HEATSHOCK70"/>
</dbReference>
<dbReference type="SUPFAM" id="SSF53067">
    <property type="entry name" value="Actin-like ATPase domain"/>
    <property type="match status" value="2"/>
</dbReference>
<dbReference type="SUPFAM" id="SSF100934">
    <property type="entry name" value="Heat shock protein 70kD (HSP70), C-terminal subdomain"/>
    <property type="match status" value="1"/>
</dbReference>
<dbReference type="SUPFAM" id="SSF100920">
    <property type="entry name" value="Heat shock protein 70kD (HSP70), peptide-binding domain"/>
    <property type="match status" value="1"/>
</dbReference>
<dbReference type="PROSITE" id="PS00297">
    <property type="entry name" value="HSP70_1"/>
    <property type="match status" value="1"/>
</dbReference>
<dbReference type="PROSITE" id="PS00329">
    <property type="entry name" value="HSP70_2"/>
    <property type="match status" value="1"/>
</dbReference>
<dbReference type="PROSITE" id="PS01036">
    <property type="entry name" value="HSP70_3"/>
    <property type="match status" value="1"/>
</dbReference>
<comment type="function">
    <text evidence="1">Chaperone involved in the maturation of iron-sulfur cluster-containing proteins. Has a low intrinsic ATPase activity which is markedly stimulated by HscB. Involved in the maturation of IscU.</text>
</comment>
<comment type="similarity">
    <text evidence="1">Belongs to the heat shock protein 70 family.</text>
</comment>
<name>HSCA_ENT38</name>
<reference key="1">
    <citation type="journal article" date="2010" name="PLoS Genet.">
        <title>Genome sequence of the plant growth promoting endophytic bacterium Enterobacter sp. 638.</title>
        <authorList>
            <person name="Taghavi S."/>
            <person name="van der Lelie D."/>
            <person name="Hoffman A."/>
            <person name="Zhang Y.B."/>
            <person name="Walla M.D."/>
            <person name="Vangronsveld J."/>
            <person name="Newman L."/>
            <person name="Monchy S."/>
        </authorList>
    </citation>
    <scope>NUCLEOTIDE SEQUENCE [LARGE SCALE GENOMIC DNA]</scope>
    <source>
        <strain>638</strain>
    </source>
</reference>
<sequence length="616" mass="65842">MALLQISEPGLSAAPHQRRLAVGIDLGTTNSLVATVRSGQAETLADAEGRHLLPSVVHYQQQGHSVGYDARTNAAKDPANTISSVKRMMGRSLVDIQQRYPHLPYQLQASENGLPMIATDAGLLNPIRVSADILKALAARATATLEGDLDGVVITVPAYFDDAQRQGTKDAARLAGLHVLRLLNEPTAAAIAYGLDSGQEGVIAVYDLGGGTFDISILRLSRGVFEVLATGGDSALGGDDFDHLLADYIREQAGIADRRDVRVQRELLDAAIDAKIALSDAQAVTVNVAGWQGEITRDQFNELIAALVKRTLLACRRALKDADVEASEVLEVVMVGGSTRVPLVRERVGEFFGRTPLTSIDPDKVVAIGAAIQADILVGNKPDSEMLLLDVIPLSLGLETMGGLVEKVIPRNTTIPVARAQEFTTFKDGQTAMSIHVMQGERELVQDCRSLARFALRGIPALPAGGAHIRVTFQVDADGLLNVTAMEKSTGVESSIQVKPSYGLTDSEIATMIQDSMSYAEQDVKARMLAEQKVEAARVLESLEGALTADAALLSAAERQVIDEATAHLRIVAAENDADAIEQAIKNVDKETQDFAARRMDKSVRVALKGQSVDEV</sequence>
<evidence type="ECO:0000255" key="1">
    <source>
        <dbReference type="HAMAP-Rule" id="MF_00679"/>
    </source>
</evidence>
<protein>
    <recommendedName>
        <fullName evidence="1">Chaperone protein HscA</fullName>
    </recommendedName>
    <alternativeName>
        <fullName evidence="1">Hsc66</fullName>
    </alternativeName>
</protein>
<proteinExistence type="inferred from homology"/>
<feature type="chain" id="PRO_1000061967" description="Chaperone protein HscA">
    <location>
        <begin position="1"/>
        <end position="616"/>
    </location>
</feature>
<organism>
    <name type="scientific">Enterobacter sp. (strain 638)</name>
    <dbReference type="NCBI Taxonomy" id="399742"/>
    <lineage>
        <taxon>Bacteria</taxon>
        <taxon>Pseudomonadati</taxon>
        <taxon>Pseudomonadota</taxon>
        <taxon>Gammaproteobacteria</taxon>
        <taxon>Enterobacterales</taxon>
        <taxon>Enterobacteriaceae</taxon>
        <taxon>Enterobacter</taxon>
    </lineage>
</organism>